<sequence>GLCLASQLLTGLFLAMHYTSDIATAFSSVAHICRDVNYGWLIRNMHANGASFFFICIYLHIGRGLYYGSYLYKETWNIGVVLLLLVMMTAFVGYV</sequence>
<evidence type="ECO:0000250" key="1"/>
<evidence type="ECO:0000250" key="2">
    <source>
        <dbReference type="UniProtKB" id="P00157"/>
    </source>
</evidence>
<evidence type="ECO:0000255" key="3">
    <source>
        <dbReference type="PROSITE-ProRule" id="PRU00968"/>
    </source>
</evidence>
<name>CYB_GOMVA</name>
<accession>P29666</accession>
<comment type="function">
    <text evidence="2">Component of the ubiquinol-cytochrome c reductase complex (complex III or cytochrome b-c1 complex) that is part of the mitochondrial respiratory chain. The b-c1 complex mediates electron transfer from ubiquinol to cytochrome c. Contributes to the generation of a proton gradient across the mitochondrial membrane that is then used for ATP synthesis.</text>
</comment>
<comment type="cofactor">
    <cofactor evidence="2">
        <name>heme b</name>
        <dbReference type="ChEBI" id="CHEBI:60344"/>
    </cofactor>
    <text evidence="2">Binds 2 heme b groups non-covalently.</text>
</comment>
<comment type="subunit">
    <text evidence="2">The cytochrome bc1 complex contains 3 respiratory subunits (MT-CYB, CYC1 and UQCRFS1), 2 core proteins (UQCRC1 and UQCRC2) and probably 6 low-molecular weight proteins.</text>
</comment>
<comment type="subcellular location">
    <subcellularLocation>
        <location evidence="2">Mitochondrion inner membrane</location>
        <topology evidence="2">Multi-pass membrane protein</topology>
    </subcellularLocation>
</comment>
<comment type="miscellaneous">
    <text evidence="1">Heme 1 (or BL or b562) is low-potential and absorbs at about 562 nm, and heme 2 (or BH or b566) is high-potential and absorbs at about 566 nm.</text>
</comment>
<comment type="similarity">
    <text evidence="3">Belongs to the cytochrome b family.</text>
</comment>
<comment type="caution">
    <text evidence="2">The full-length protein contains only eight transmembrane helices, not nine as predicted by bioinformatics tools.</text>
</comment>
<protein>
    <recommendedName>
        <fullName>Cytochrome b</fullName>
    </recommendedName>
    <alternativeName>
        <fullName>Complex III subunit 3</fullName>
    </alternativeName>
    <alternativeName>
        <fullName>Complex III subunit III</fullName>
    </alternativeName>
    <alternativeName>
        <fullName>Cytochrome b-c1 complex subunit 3</fullName>
    </alternativeName>
    <alternativeName>
        <fullName>Ubiquinol-cytochrome-c reductase complex cytochrome b subunit</fullName>
    </alternativeName>
</protein>
<proteinExistence type="inferred from homology"/>
<geneLocation type="mitochondrion"/>
<keyword id="KW-0249">Electron transport</keyword>
<keyword id="KW-0349">Heme</keyword>
<keyword id="KW-0408">Iron</keyword>
<keyword id="KW-0472">Membrane</keyword>
<keyword id="KW-0479">Metal-binding</keyword>
<keyword id="KW-0496">Mitochondrion</keyword>
<keyword id="KW-0999">Mitochondrion inner membrane</keyword>
<keyword id="KW-0679">Respiratory chain</keyword>
<keyword id="KW-0812">Transmembrane</keyword>
<keyword id="KW-1133">Transmembrane helix</keyword>
<keyword id="KW-0813">Transport</keyword>
<keyword id="KW-0830">Ubiquinone</keyword>
<feature type="chain" id="PRO_0000061009" description="Cytochrome b">
    <location>
        <begin position="1" status="less than"/>
        <end position="95" status="greater than"/>
    </location>
</feature>
<feature type="transmembrane region" description="Helical" evidence="2">
    <location>
        <begin position="1" status="less than"/>
        <end position="16"/>
    </location>
</feature>
<feature type="transmembrane region" description="Helical" evidence="2">
    <location>
        <begin position="40"/>
        <end position="61"/>
    </location>
</feature>
<feature type="transmembrane region" description="Helical" evidence="2">
    <location>
        <begin position="76"/>
        <end position="95" status="greater than"/>
    </location>
</feature>
<feature type="binding site" description="axial binding residue" evidence="2">
    <location>
        <position position="46"/>
    </location>
    <ligand>
        <name>heme b</name>
        <dbReference type="ChEBI" id="CHEBI:60344"/>
        <label>b562</label>
    </ligand>
    <ligandPart>
        <name>Fe</name>
        <dbReference type="ChEBI" id="CHEBI:18248"/>
    </ligandPart>
</feature>
<feature type="binding site" description="axial binding residue" evidence="2">
    <location>
        <position position="60"/>
    </location>
    <ligand>
        <name>heme b</name>
        <dbReference type="ChEBI" id="CHEBI:60344"/>
        <label>b566</label>
    </ligand>
    <ligandPart>
        <name>Fe</name>
        <dbReference type="ChEBI" id="CHEBI:18248"/>
    </ligandPart>
</feature>
<feature type="non-terminal residue">
    <location>
        <position position="1"/>
    </location>
</feature>
<feature type="non-terminal residue">
    <location>
        <position position="95"/>
    </location>
</feature>
<reference key="1">
    <citation type="journal article" date="1991" name="Mol. Biol. Evol.">
        <title>Phylogenetic relationships of neopterygian fishes, inferred from mitochondrial DNA sequences.</title>
        <authorList>
            <person name="Normark B.B."/>
            <person name="McCune A.R."/>
            <person name="Harrison R.G."/>
        </authorList>
    </citation>
    <scope>NUCLEOTIDE SEQUENCE [GENOMIC DNA]</scope>
</reference>
<organism>
    <name type="scientific">Gomphosus varius</name>
    <name type="common">Bird wrasse</name>
    <name type="synonym">Gomphosus tricolor</name>
    <dbReference type="NCBI Taxonomy" id="8249"/>
    <lineage>
        <taxon>Eukaryota</taxon>
        <taxon>Metazoa</taxon>
        <taxon>Chordata</taxon>
        <taxon>Craniata</taxon>
        <taxon>Vertebrata</taxon>
        <taxon>Euteleostomi</taxon>
        <taxon>Actinopterygii</taxon>
        <taxon>Neopterygii</taxon>
        <taxon>Teleostei</taxon>
        <taxon>Neoteleostei</taxon>
        <taxon>Acanthomorphata</taxon>
        <taxon>Eupercaria</taxon>
        <taxon>Labriformes</taxon>
        <taxon>Labridae</taxon>
        <taxon>Gomphosus</taxon>
    </lineage>
</organism>
<gene>
    <name type="primary">mt-cyb</name>
    <name type="synonym">cob</name>
    <name type="synonym">cytb</name>
    <name type="synonym">mtcyb</name>
</gene>
<dbReference type="EMBL" id="M64896">
    <property type="protein sequence ID" value="AAB01462.1"/>
    <property type="molecule type" value="Genomic_DNA"/>
</dbReference>
<dbReference type="SMR" id="P29666"/>
<dbReference type="GO" id="GO:0005743">
    <property type="term" value="C:mitochondrial inner membrane"/>
    <property type="evidence" value="ECO:0007669"/>
    <property type="project" value="UniProtKB-SubCell"/>
</dbReference>
<dbReference type="GO" id="GO:0046872">
    <property type="term" value="F:metal ion binding"/>
    <property type="evidence" value="ECO:0007669"/>
    <property type="project" value="UniProtKB-KW"/>
</dbReference>
<dbReference type="GO" id="GO:0008121">
    <property type="term" value="F:ubiquinol-cytochrome-c reductase activity"/>
    <property type="evidence" value="ECO:0007669"/>
    <property type="project" value="TreeGrafter"/>
</dbReference>
<dbReference type="GO" id="GO:0006122">
    <property type="term" value="P:mitochondrial electron transport, ubiquinol to cytochrome c"/>
    <property type="evidence" value="ECO:0007669"/>
    <property type="project" value="TreeGrafter"/>
</dbReference>
<dbReference type="Gene3D" id="1.20.810.10">
    <property type="entry name" value="Cytochrome Bc1 Complex, Chain C"/>
    <property type="match status" value="1"/>
</dbReference>
<dbReference type="InterPro" id="IPR005797">
    <property type="entry name" value="Cyt_b/b6_N"/>
</dbReference>
<dbReference type="InterPro" id="IPR027387">
    <property type="entry name" value="Cytb/b6-like_sf"/>
</dbReference>
<dbReference type="InterPro" id="IPR016174">
    <property type="entry name" value="Di-haem_cyt_TM"/>
</dbReference>
<dbReference type="PANTHER" id="PTHR19271">
    <property type="entry name" value="CYTOCHROME B"/>
    <property type="match status" value="1"/>
</dbReference>
<dbReference type="PANTHER" id="PTHR19271:SF16">
    <property type="entry name" value="CYTOCHROME B"/>
    <property type="match status" value="1"/>
</dbReference>
<dbReference type="Pfam" id="PF00033">
    <property type="entry name" value="Cytochrome_B"/>
    <property type="match status" value="1"/>
</dbReference>
<dbReference type="SUPFAM" id="SSF81342">
    <property type="entry name" value="Transmembrane di-heme cytochromes"/>
    <property type="match status" value="1"/>
</dbReference>
<dbReference type="PROSITE" id="PS51002">
    <property type="entry name" value="CYTB_NTER"/>
    <property type="match status" value="1"/>
</dbReference>